<evidence type="ECO:0000250" key="1"/>
<evidence type="ECO:0000255" key="2">
    <source>
        <dbReference type="PROSITE-ProRule" id="PRU00161"/>
    </source>
</evidence>
<evidence type="ECO:0000305" key="3"/>
<reference key="1">
    <citation type="journal article" date="2002" name="Nature">
        <title>The genome sequence of Schizosaccharomyces pombe.</title>
        <authorList>
            <person name="Wood V."/>
            <person name="Gwilliam R."/>
            <person name="Rajandream M.A."/>
            <person name="Lyne M.H."/>
            <person name="Lyne R."/>
            <person name="Stewart A."/>
            <person name="Sgouros J.G."/>
            <person name="Peat N."/>
            <person name="Hayles J."/>
            <person name="Baker S.G."/>
            <person name="Basham D."/>
            <person name="Bowman S."/>
            <person name="Brooks K."/>
            <person name="Brown D."/>
            <person name="Brown S."/>
            <person name="Chillingworth T."/>
            <person name="Churcher C.M."/>
            <person name="Collins M."/>
            <person name="Connor R."/>
            <person name="Cronin A."/>
            <person name="Davis P."/>
            <person name="Feltwell T."/>
            <person name="Fraser A."/>
            <person name="Gentles S."/>
            <person name="Goble A."/>
            <person name="Hamlin N."/>
            <person name="Harris D.E."/>
            <person name="Hidalgo J."/>
            <person name="Hodgson G."/>
            <person name="Holroyd S."/>
            <person name="Hornsby T."/>
            <person name="Howarth S."/>
            <person name="Huckle E.J."/>
            <person name="Hunt S."/>
            <person name="Jagels K."/>
            <person name="James K.D."/>
            <person name="Jones L."/>
            <person name="Jones M."/>
            <person name="Leather S."/>
            <person name="McDonald S."/>
            <person name="McLean J."/>
            <person name="Mooney P."/>
            <person name="Moule S."/>
            <person name="Mungall K.L."/>
            <person name="Murphy L.D."/>
            <person name="Niblett D."/>
            <person name="Odell C."/>
            <person name="Oliver K."/>
            <person name="O'Neil S."/>
            <person name="Pearson D."/>
            <person name="Quail M.A."/>
            <person name="Rabbinowitsch E."/>
            <person name="Rutherford K.M."/>
            <person name="Rutter S."/>
            <person name="Saunders D."/>
            <person name="Seeger K."/>
            <person name="Sharp S."/>
            <person name="Skelton J."/>
            <person name="Simmonds M.N."/>
            <person name="Squares R."/>
            <person name="Squares S."/>
            <person name="Stevens K."/>
            <person name="Taylor K."/>
            <person name="Taylor R.G."/>
            <person name="Tivey A."/>
            <person name="Walsh S.V."/>
            <person name="Warren T."/>
            <person name="Whitehead S."/>
            <person name="Woodward J.R."/>
            <person name="Volckaert G."/>
            <person name="Aert R."/>
            <person name="Robben J."/>
            <person name="Grymonprez B."/>
            <person name="Weltjens I."/>
            <person name="Vanstreels E."/>
            <person name="Rieger M."/>
            <person name="Schaefer M."/>
            <person name="Mueller-Auer S."/>
            <person name="Gabel C."/>
            <person name="Fuchs M."/>
            <person name="Duesterhoeft A."/>
            <person name="Fritzc C."/>
            <person name="Holzer E."/>
            <person name="Moestl D."/>
            <person name="Hilbert H."/>
            <person name="Borzym K."/>
            <person name="Langer I."/>
            <person name="Beck A."/>
            <person name="Lehrach H."/>
            <person name="Reinhardt R."/>
            <person name="Pohl T.M."/>
            <person name="Eger P."/>
            <person name="Zimmermann W."/>
            <person name="Wedler H."/>
            <person name="Wambutt R."/>
            <person name="Purnelle B."/>
            <person name="Goffeau A."/>
            <person name="Cadieu E."/>
            <person name="Dreano S."/>
            <person name="Gloux S."/>
            <person name="Lelaure V."/>
            <person name="Mottier S."/>
            <person name="Galibert F."/>
            <person name="Aves S.J."/>
            <person name="Xiang Z."/>
            <person name="Hunt C."/>
            <person name="Moore K."/>
            <person name="Hurst S.M."/>
            <person name="Lucas M."/>
            <person name="Rochet M."/>
            <person name="Gaillardin C."/>
            <person name="Tallada V.A."/>
            <person name="Garzon A."/>
            <person name="Thode G."/>
            <person name="Daga R.R."/>
            <person name="Cruzado L."/>
            <person name="Jimenez J."/>
            <person name="Sanchez M."/>
            <person name="del Rey F."/>
            <person name="Benito J."/>
            <person name="Dominguez A."/>
            <person name="Revuelta J.L."/>
            <person name="Moreno S."/>
            <person name="Armstrong J."/>
            <person name="Forsburg S.L."/>
            <person name="Cerutti L."/>
            <person name="Lowe T."/>
            <person name="McCombie W.R."/>
            <person name="Paulsen I."/>
            <person name="Potashkin J."/>
            <person name="Shpakovski G.V."/>
            <person name="Ussery D."/>
            <person name="Barrell B.G."/>
            <person name="Nurse P."/>
        </authorList>
    </citation>
    <scope>NUCLEOTIDE SEQUENCE [LARGE SCALE GENOMIC DNA]</scope>
    <source>
        <strain>972 / ATCC 24843</strain>
    </source>
</reference>
<gene>
    <name type="primary">tma20</name>
    <name type="ORF">SPBC31F10.12</name>
</gene>
<accession>P87313</accession>
<proteinExistence type="inferred from homology"/>
<keyword id="KW-0963">Cytoplasm</keyword>
<keyword id="KW-0648">Protein biosynthesis</keyword>
<keyword id="KW-1185">Reference proteome</keyword>
<keyword id="KW-0694">RNA-binding</keyword>
<feature type="chain" id="PRO_0000316591" description="Translation machinery-associated protein 20">
    <location>
        <begin position="1"/>
        <end position="181"/>
    </location>
</feature>
<feature type="domain" description="PUA" evidence="2">
    <location>
        <begin position="92"/>
        <end position="172"/>
    </location>
</feature>
<comment type="function">
    <text evidence="1">Involved in translation.</text>
</comment>
<comment type="subunit">
    <text evidence="1">Associates with ribosomal complexes.</text>
</comment>
<comment type="subcellular location">
    <subcellularLocation>
        <location evidence="1">Cytoplasm</location>
    </subcellularLocation>
</comment>
<comment type="similarity">
    <text evidence="3">Belongs to the TMA20 family.</text>
</comment>
<dbReference type="EMBL" id="CU329671">
    <property type="protein sequence ID" value="CAB39806.2"/>
    <property type="molecule type" value="Genomic_DNA"/>
</dbReference>
<dbReference type="PIR" id="T40215">
    <property type="entry name" value="T40215"/>
</dbReference>
<dbReference type="RefSeq" id="NP_596574.2">
    <property type="nucleotide sequence ID" value="NM_001022495.3"/>
</dbReference>
<dbReference type="SMR" id="P87313"/>
<dbReference type="BioGRID" id="276924">
    <property type="interactions" value="104"/>
</dbReference>
<dbReference type="FunCoup" id="P87313">
    <property type="interactions" value="253"/>
</dbReference>
<dbReference type="STRING" id="284812.P87313"/>
<dbReference type="iPTMnet" id="P87313"/>
<dbReference type="PaxDb" id="4896-SPBC31F10.12.1"/>
<dbReference type="EnsemblFungi" id="SPBC31F10.12.1">
    <property type="protein sequence ID" value="SPBC31F10.12.1:pep"/>
    <property type="gene ID" value="SPBC31F10.12"/>
</dbReference>
<dbReference type="GeneID" id="2540396"/>
<dbReference type="KEGG" id="spo:2540396"/>
<dbReference type="PomBase" id="SPBC31F10.12">
    <property type="gene designation" value="tma20"/>
</dbReference>
<dbReference type="VEuPathDB" id="FungiDB:SPBC31F10.12"/>
<dbReference type="eggNOG" id="KOG2523">
    <property type="taxonomic scope" value="Eukaryota"/>
</dbReference>
<dbReference type="HOGENOM" id="CLU_090468_0_1_1"/>
<dbReference type="InParanoid" id="P87313"/>
<dbReference type="OMA" id="GVENIHY"/>
<dbReference type="PhylomeDB" id="P87313"/>
<dbReference type="PRO" id="PR:P87313"/>
<dbReference type="Proteomes" id="UP000002485">
    <property type="component" value="Chromosome II"/>
</dbReference>
<dbReference type="GO" id="GO:0005737">
    <property type="term" value="C:cytoplasm"/>
    <property type="evidence" value="ECO:0000266"/>
    <property type="project" value="PomBase"/>
</dbReference>
<dbReference type="GO" id="GO:0003723">
    <property type="term" value="F:RNA binding"/>
    <property type="evidence" value="ECO:0000255"/>
    <property type="project" value="PomBase"/>
</dbReference>
<dbReference type="GO" id="GO:0001731">
    <property type="term" value="P:formation of translation preinitiation complex"/>
    <property type="evidence" value="ECO:0000318"/>
    <property type="project" value="GO_Central"/>
</dbReference>
<dbReference type="GO" id="GO:0042254">
    <property type="term" value="P:ribosome biogenesis"/>
    <property type="evidence" value="ECO:0000266"/>
    <property type="project" value="PomBase"/>
</dbReference>
<dbReference type="CDD" id="cd11609">
    <property type="entry name" value="MCT1_N"/>
    <property type="match status" value="1"/>
</dbReference>
<dbReference type="CDD" id="cd21155">
    <property type="entry name" value="PUA_MCTS-1-like"/>
    <property type="match status" value="1"/>
</dbReference>
<dbReference type="FunFam" id="3.10.400.20:FF:000001">
    <property type="entry name" value="Malignant T-cell-amplified sequence 1"/>
    <property type="match status" value="1"/>
</dbReference>
<dbReference type="Gene3D" id="3.10.400.20">
    <property type="match status" value="1"/>
</dbReference>
<dbReference type="InterPro" id="IPR016437">
    <property type="entry name" value="MCT-1/Tma20"/>
</dbReference>
<dbReference type="InterPro" id="IPR041366">
    <property type="entry name" value="Pre-PUA"/>
</dbReference>
<dbReference type="InterPro" id="IPR002478">
    <property type="entry name" value="PUA"/>
</dbReference>
<dbReference type="InterPro" id="IPR015947">
    <property type="entry name" value="PUA-like_sf"/>
</dbReference>
<dbReference type="InterPro" id="IPR004521">
    <property type="entry name" value="Uncharacterised_CHP00451"/>
</dbReference>
<dbReference type="NCBIfam" id="TIGR00451">
    <property type="entry name" value="unchar_dom_2"/>
    <property type="match status" value="1"/>
</dbReference>
<dbReference type="PANTHER" id="PTHR22798:SF0">
    <property type="entry name" value="MALIGNANT T-CELL-AMPLIFIED SEQUENCE 1"/>
    <property type="match status" value="1"/>
</dbReference>
<dbReference type="PANTHER" id="PTHR22798">
    <property type="entry name" value="MCT-1 PROTEIN"/>
    <property type="match status" value="1"/>
</dbReference>
<dbReference type="Pfam" id="PF17832">
    <property type="entry name" value="Pre-PUA"/>
    <property type="match status" value="1"/>
</dbReference>
<dbReference type="Pfam" id="PF01472">
    <property type="entry name" value="PUA"/>
    <property type="match status" value="1"/>
</dbReference>
<dbReference type="PIRSF" id="PIRSF005067">
    <property type="entry name" value="Tma_RNA-bind_prd"/>
    <property type="match status" value="1"/>
</dbReference>
<dbReference type="SMART" id="SM00359">
    <property type="entry name" value="PUA"/>
    <property type="match status" value="1"/>
</dbReference>
<dbReference type="SUPFAM" id="SSF88697">
    <property type="entry name" value="PUA domain-like"/>
    <property type="match status" value="1"/>
</dbReference>
<dbReference type="PROSITE" id="PS50890">
    <property type="entry name" value="PUA"/>
    <property type="match status" value="1"/>
</dbReference>
<protein>
    <recommendedName>
        <fullName>Translation machinery-associated protein 20</fullName>
    </recommendedName>
</protein>
<sequence length="181" mass="20250">MFKRFNSREDIKGTTPIKSSIQRGIKAKLVQAYPNLKQVIDELIPKKSQLTQIKCEDRLFLYTLNGEIILFQHFDGPIIPSLRLVHKCPDAFTQVRVDRGAIKFLLSGANIMIPGLVSKGGNLPDDIEKDQYVIVTAEGKEAPAAIGLTKMSAKEMKETNKGIGIENVHYLGDNLWKTILE</sequence>
<organism>
    <name type="scientific">Schizosaccharomyces pombe (strain 972 / ATCC 24843)</name>
    <name type="common">Fission yeast</name>
    <dbReference type="NCBI Taxonomy" id="284812"/>
    <lineage>
        <taxon>Eukaryota</taxon>
        <taxon>Fungi</taxon>
        <taxon>Dikarya</taxon>
        <taxon>Ascomycota</taxon>
        <taxon>Taphrinomycotina</taxon>
        <taxon>Schizosaccharomycetes</taxon>
        <taxon>Schizosaccharomycetales</taxon>
        <taxon>Schizosaccharomycetaceae</taxon>
        <taxon>Schizosaccharomyces</taxon>
    </lineage>
</organism>
<name>TMA20_SCHPO</name>